<feature type="chain" id="PRO_0000252538" description="Large ribosomal subunit protein bL19">
    <location>
        <begin position="1"/>
        <end position="142"/>
    </location>
</feature>
<name>RL19_RICBR</name>
<organism>
    <name type="scientific">Rickettsia bellii (strain RML369-C)</name>
    <dbReference type="NCBI Taxonomy" id="336407"/>
    <lineage>
        <taxon>Bacteria</taxon>
        <taxon>Pseudomonadati</taxon>
        <taxon>Pseudomonadota</taxon>
        <taxon>Alphaproteobacteria</taxon>
        <taxon>Rickettsiales</taxon>
        <taxon>Rickettsiaceae</taxon>
        <taxon>Rickettsieae</taxon>
        <taxon>Rickettsia</taxon>
        <taxon>belli group</taxon>
    </lineage>
</organism>
<evidence type="ECO:0000255" key="1">
    <source>
        <dbReference type="HAMAP-Rule" id="MF_00402"/>
    </source>
</evidence>
<evidence type="ECO:0000305" key="2"/>
<keyword id="KW-0687">Ribonucleoprotein</keyword>
<keyword id="KW-0689">Ribosomal protein</keyword>
<gene>
    <name evidence="1" type="primary">rplS</name>
    <name type="ordered locus">RBE_1218</name>
</gene>
<accession>Q1RH65</accession>
<dbReference type="EMBL" id="CP000087">
    <property type="protein sequence ID" value="ABE05299.1"/>
    <property type="molecule type" value="Genomic_DNA"/>
</dbReference>
<dbReference type="RefSeq" id="WP_011477875.1">
    <property type="nucleotide sequence ID" value="NC_007940.1"/>
</dbReference>
<dbReference type="SMR" id="Q1RH65"/>
<dbReference type="KEGG" id="rbe:RBE_1218"/>
<dbReference type="eggNOG" id="COG0335">
    <property type="taxonomic scope" value="Bacteria"/>
</dbReference>
<dbReference type="HOGENOM" id="CLU_103507_1_0_5"/>
<dbReference type="OrthoDB" id="9803541at2"/>
<dbReference type="Proteomes" id="UP000001951">
    <property type="component" value="Chromosome"/>
</dbReference>
<dbReference type="GO" id="GO:0022625">
    <property type="term" value="C:cytosolic large ribosomal subunit"/>
    <property type="evidence" value="ECO:0007669"/>
    <property type="project" value="TreeGrafter"/>
</dbReference>
<dbReference type="GO" id="GO:0003735">
    <property type="term" value="F:structural constituent of ribosome"/>
    <property type="evidence" value="ECO:0007669"/>
    <property type="project" value="InterPro"/>
</dbReference>
<dbReference type="GO" id="GO:0006412">
    <property type="term" value="P:translation"/>
    <property type="evidence" value="ECO:0007669"/>
    <property type="project" value="UniProtKB-UniRule"/>
</dbReference>
<dbReference type="Gene3D" id="2.30.30.790">
    <property type="match status" value="1"/>
</dbReference>
<dbReference type="HAMAP" id="MF_00402">
    <property type="entry name" value="Ribosomal_bL19"/>
    <property type="match status" value="1"/>
</dbReference>
<dbReference type="InterPro" id="IPR001857">
    <property type="entry name" value="Ribosomal_bL19"/>
</dbReference>
<dbReference type="InterPro" id="IPR018257">
    <property type="entry name" value="Ribosomal_bL19_CS"/>
</dbReference>
<dbReference type="InterPro" id="IPR038657">
    <property type="entry name" value="Ribosomal_bL19_sf"/>
</dbReference>
<dbReference type="InterPro" id="IPR008991">
    <property type="entry name" value="Translation_prot_SH3-like_sf"/>
</dbReference>
<dbReference type="NCBIfam" id="TIGR01024">
    <property type="entry name" value="rplS_bact"/>
    <property type="match status" value="1"/>
</dbReference>
<dbReference type="PANTHER" id="PTHR15680:SF9">
    <property type="entry name" value="LARGE RIBOSOMAL SUBUNIT PROTEIN BL19M"/>
    <property type="match status" value="1"/>
</dbReference>
<dbReference type="PANTHER" id="PTHR15680">
    <property type="entry name" value="RIBOSOMAL PROTEIN L19"/>
    <property type="match status" value="1"/>
</dbReference>
<dbReference type="Pfam" id="PF01245">
    <property type="entry name" value="Ribosomal_L19"/>
    <property type="match status" value="1"/>
</dbReference>
<dbReference type="PIRSF" id="PIRSF002191">
    <property type="entry name" value="Ribosomal_L19"/>
    <property type="match status" value="1"/>
</dbReference>
<dbReference type="PRINTS" id="PR00061">
    <property type="entry name" value="RIBOSOMALL19"/>
</dbReference>
<dbReference type="SUPFAM" id="SSF50104">
    <property type="entry name" value="Translation proteins SH3-like domain"/>
    <property type="match status" value="1"/>
</dbReference>
<dbReference type="PROSITE" id="PS01015">
    <property type="entry name" value="RIBOSOMAL_L19"/>
    <property type="match status" value="1"/>
</dbReference>
<sequence>MNIIDRFEQENISKLIENKKIPDFKAGDTVKVTVKIVDRSVEKDGKEKLTERFQAYEGVVIAKRNRGITSSFLVRKISHGEGVERRFMTYSPVVHAIDVVKYGVVRRAKLYYLRERSGKSARIKERHMHIAKKPKAKVAEAV</sequence>
<comment type="function">
    <text evidence="1">This protein is located at the 30S-50S ribosomal subunit interface and may play a role in the structure and function of the aminoacyl-tRNA binding site.</text>
</comment>
<comment type="similarity">
    <text evidence="1">Belongs to the bacterial ribosomal protein bL19 family.</text>
</comment>
<protein>
    <recommendedName>
        <fullName evidence="1">Large ribosomal subunit protein bL19</fullName>
    </recommendedName>
    <alternativeName>
        <fullName evidence="2">50S ribosomal protein L19</fullName>
    </alternativeName>
</protein>
<proteinExistence type="inferred from homology"/>
<reference key="1">
    <citation type="journal article" date="2006" name="PLoS Genet.">
        <title>Genome sequence of Rickettsia bellii illuminates the role of amoebae in gene exchanges between intracellular pathogens.</title>
        <authorList>
            <person name="Ogata H."/>
            <person name="La Scola B."/>
            <person name="Audic S."/>
            <person name="Renesto P."/>
            <person name="Blanc G."/>
            <person name="Robert C."/>
            <person name="Fournier P.-E."/>
            <person name="Claverie J.-M."/>
            <person name="Raoult D."/>
        </authorList>
    </citation>
    <scope>NUCLEOTIDE SEQUENCE [LARGE SCALE GENOMIC DNA]</scope>
    <source>
        <strain>RML369-C</strain>
    </source>
</reference>